<comment type="similarity">
    <text evidence="1">Belongs to the coronaviruses ns12.7 protein family.</text>
</comment>
<sequence>MDIWKPEIKYLRYTNGFNVSELEDACFKFNYKFPKVGYCRVPSHAWCRNQGSFCATLTLYGKSKHYDKYFGVITGFTAFANTVEEAVNKLVFLAVDFITWRRQELNVYG</sequence>
<dbReference type="EMBL" id="AF058943">
    <property type="protein sequence ID" value="AAF25512.1"/>
    <property type="molecule type" value="Genomic_RNA"/>
</dbReference>
<dbReference type="RefSeq" id="NP_150080.1">
    <property type="nucleotide sequence ID" value="NC_003045.1"/>
</dbReference>
<dbReference type="KEGG" id="vg:1724647"/>
<dbReference type="InterPro" id="IPR006841">
    <property type="entry name" value="Corona_NS2"/>
</dbReference>
<dbReference type="Pfam" id="PF04753">
    <property type="entry name" value="Corona_NS12-7"/>
    <property type="match status" value="1"/>
</dbReference>
<organism>
    <name type="scientific">Bovine coronavirus (strain LSU-94LSS-051)</name>
    <name type="common">BCoV-LSU</name>
    <name type="synonym">BCV</name>
    <dbReference type="NCBI Taxonomy" id="233261"/>
    <lineage>
        <taxon>Viruses</taxon>
        <taxon>Riboviria</taxon>
        <taxon>Orthornavirae</taxon>
        <taxon>Pisuviricota</taxon>
        <taxon>Pisoniviricetes</taxon>
        <taxon>Nidovirales</taxon>
        <taxon>Cornidovirineae</taxon>
        <taxon>Coronaviridae</taxon>
        <taxon>Orthocoronavirinae</taxon>
        <taxon>Betacoronavirus</taxon>
        <taxon>Embecovirus</taxon>
        <taxon>Betacoronavirus 1</taxon>
    </lineage>
</organism>
<name>NS12_CVBLS</name>
<reference key="1">
    <citation type="journal article" date="1998" name="Virus Genes">
        <title>Nucleotide and predicted amino acid sequences of all genes encoded by the 3' genomic portion (9.5 kb) of respiratory bovine coronaviruses and comparisons among respiratory and enteric coronaviruses.</title>
        <authorList>
            <person name="Chouljenko V.N."/>
            <person name="Kousoulas K.G."/>
            <person name="Lin X.Q."/>
            <person name="Storz J."/>
        </authorList>
    </citation>
    <scope>NUCLEOTIDE SEQUENCE [GENOMIC RNA]</scope>
    <source>
        <strain>Isolate LSU-94LSS-051-2</strain>
    </source>
</reference>
<proteinExistence type="inferred from homology"/>
<accession>P0C2P8</accession>
<accession>Q9QAR2</accession>
<evidence type="ECO:0000305" key="1"/>
<gene>
    <name type="ORF">5a</name>
</gene>
<feature type="chain" id="PRO_0000283949" description="Non-structural protein of 12.7 kDa">
    <location>
        <begin position="1"/>
        <end position="109"/>
    </location>
</feature>
<protein>
    <recommendedName>
        <fullName>Non-structural protein of 12.7 kDa</fullName>
        <shortName>ns12.7</shortName>
    </recommendedName>
    <alternativeName>
        <fullName>12.7 kDa accessory protein</fullName>
    </alternativeName>
</protein>
<organismHost>
    <name type="scientific">Bos taurus</name>
    <name type="common">Bovine</name>
    <dbReference type="NCBI Taxonomy" id="9913"/>
</organismHost>